<protein>
    <recommendedName>
        <fullName>Platelet-derived growth factor receptor-like protein</fullName>
        <shortName>PDGFR-like protein</shortName>
    </recommendedName>
</protein>
<comment type="subunit">
    <text evidence="1">Forms a complex composed of PDGFRL, TNK2 and GRB2.</text>
</comment>
<comment type="subcellular location">
    <subcellularLocation>
        <location evidence="5">Secreted</location>
    </subcellularLocation>
</comment>
<sequence>MKFWLLLGLLLLHEALEDVAGQHSPKNKRPKEQGENRIKPTNKKAKPKIPKVKDRDSTDSTAKSQSIMMQAMGNGRFQRPAATVSLLAGQTLELRCKGSKVEWSYPAYLDTFKDSRLTVKQSERYGQLTLVNSTAADTGEFSCWEQLCNGYICRRDEAKTGSTYIFFTEKGELFVPSPSYFDVVYLNPDRQAVVPCRVTAPSAKVTLHREFPAKEIPANGTDIVYDMKRGFVYLQPHSDHQGVVYCKAEAGGKSQISVKYQLLYVEVPSGPPSTTILASSNKVRGGDDISVLCTVLGEPDVEVEFRWLFPGQKDERPVTIQDTWRLIHRGLGHTTRISQSVIIVEDFETIDAGYYICTAQNLRGQTTVATTVEFS</sequence>
<dbReference type="EMBL" id="AK004179">
    <property type="protein sequence ID" value="BAB23210.1"/>
    <property type="molecule type" value="mRNA"/>
</dbReference>
<dbReference type="EMBL" id="AK132625">
    <property type="protein sequence ID" value="BAE21269.1"/>
    <property type="molecule type" value="mRNA"/>
</dbReference>
<dbReference type="EMBL" id="BC058275">
    <property type="protein sequence ID" value="AAH58275.1"/>
    <property type="molecule type" value="mRNA"/>
</dbReference>
<dbReference type="CCDS" id="CCDS22259.1"/>
<dbReference type="RefSeq" id="NP_081116.3">
    <property type="nucleotide sequence ID" value="NM_026840.3"/>
</dbReference>
<dbReference type="SMR" id="Q6PE55"/>
<dbReference type="FunCoup" id="Q6PE55">
    <property type="interactions" value="17"/>
</dbReference>
<dbReference type="STRING" id="10090.ENSMUSP00000034004"/>
<dbReference type="GlyCosmos" id="Q6PE55">
    <property type="glycosylation" value="1 site, No reported glycans"/>
</dbReference>
<dbReference type="GlyGen" id="Q6PE55">
    <property type="glycosylation" value="1 site"/>
</dbReference>
<dbReference type="iPTMnet" id="Q6PE55"/>
<dbReference type="PhosphoSitePlus" id="Q6PE55"/>
<dbReference type="jPOST" id="Q6PE55"/>
<dbReference type="PaxDb" id="10090-ENSMUSP00000034004"/>
<dbReference type="ProteomicsDB" id="287920"/>
<dbReference type="Pumba" id="Q6PE55"/>
<dbReference type="DNASU" id="68797"/>
<dbReference type="GeneID" id="68797"/>
<dbReference type="KEGG" id="mmu:68797"/>
<dbReference type="UCSC" id="uc009lni.2">
    <property type="organism name" value="mouse"/>
</dbReference>
<dbReference type="AGR" id="MGI:1916047"/>
<dbReference type="CTD" id="5157"/>
<dbReference type="MGI" id="MGI:1916047">
    <property type="gene designation" value="Pdgfrl"/>
</dbReference>
<dbReference type="eggNOG" id="KOG0200">
    <property type="taxonomic scope" value="Eukaryota"/>
</dbReference>
<dbReference type="InParanoid" id="Q6PE55"/>
<dbReference type="OrthoDB" id="9864753at2759"/>
<dbReference type="PhylomeDB" id="Q6PE55"/>
<dbReference type="BioGRID-ORCS" id="68797">
    <property type="hits" value="2 hits in 79 CRISPR screens"/>
</dbReference>
<dbReference type="ChiTaRS" id="Pdgfrl">
    <property type="organism name" value="mouse"/>
</dbReference>
<dbReference type="PRO" id="PR:Q6PE55"/>
<dbReference type="Proteomes" id="UP000000589">
    <property type="component" value="Unplaced"/>
</dbReference>
<dbReference type="RNAct" id="Q6PE55">
    <property type="molecule type" value="protein"/>
</dbReference>
<dbReference type="GO" id="GO:0005576">
    <property type="term" value="C:extracellular region"/>
    <property type="evidence" value="ECO:0007669"/>
    <property type="project" value="UniProtKB-SubCell"/>
</dbReference>
<dbReference type="FunFam" id="2.60.40.10:FF:000223">
    <property type="entry name" value="Platelet-derived growth factor receptor beta"/>
    <property type="match status" value="1"/>
</dbReference>
<dbReference type="FunFam" id="2.60.40.10:FF:000907">
    <property type="entry name" value="Platelet-derived growth factor receptor-like protein"/>
    <property type="match status" value="1"/>
</dbReference>
<dbReference type="FunFam" id="2.60.40.10:FF:001395">
    <property type="entry name" value="Platelet-derived growth factor receptor-like protein"/>
    <property type="match status" value="1"/>
</dbReference>
<dbReference type="Gene3D" id="2.60.40.10">
    <property type="entry name" value="Immunoglobulins"/>
    <property type="match status" value="3"/>
</dbReference>
<dbReference type="InterPro" id="IPR007110">
    <property type="entry name" value="Ig-like_dom"/>
</dbReference>
<dbReference type="InterPro" id="IPR036179">
    <property type="entry name" value="Ig-like_dom_sf"/>
</dbReference>
<dbReference type="InterPro" id="IPR013783">
    <property type="entry name" value="Ig-like_fold"/>
</dbReference>
<dbReference type="InterPro" id="IPR003599">
    <property type="entry name" value="Ig_sub"/>
</dbReference>
<dbReference type="InterPro" id="IPR042495">
    <property type="entry name" value="PDGFRL"/>
</dbReference>
<dbReference type="PANTHER" id="PTHR15360">
    <property type="entry name" value="PLATELET-DERIVED GROWTH FACTOR RECEPTOR LIKE"/>
    <property type="match status" value="1"/>
</dbReference>
<dbReference type="PANTHER" id="PTHR15360:SF1">
    <property type="entry name" value="PLATELET-DERIVED GROWTH FACTOR RECEPTOR-LIKE PROTEIN"/>
    <property type="match status" value="1"/>
</dbReference>
<dbReference type="Pfam" id="PF13927">
    <property type="entry name" value="Ig_3"/>
    <property type="match status" value="1"/>
</dbReference>
<dbReference type="Pfam" id="PF21339">
    <property type="entry name" value="VEGFR-1-like_Ig-like"/>
    <property type="match status" value="1"/>
</dbReference>
<dbReference type="SMART" id="SM00409">
    <property type="entry name" value="IG"/>
    <property type="match status" value="2"/>
</dbReference>
<dbReference type="SUPFAM" id="SSF48726">
    <property type="entry name" value="Immunoglobulin"/>
    <property type="match status" value="3"/>
</dbReference>
<dbReference type="PROSITE" id="PS50835">
    <property type="entry name" value="IG_LIKE"/>
    <property type="match status" value="1"/>
</dbReference>
<organism>
    <name type="scientific">Mus musculus</name>
    <name type="common">Mouse</name>
    <dbReference type="NCBI Taxonomy" id="10090"/>
    <lineage>
        <taxon>Eukaryota</taxon>
        <taxon>Metazoa</taxon>
        <taxon>Chordata</taxon>
        <taxon>Craniata</taxon>
        <taxon>Vertebrata</taxon>
        <taxon>Euteleostomi</taxon>
        <taxon>Mammalia</taxon>
        <taxon>Eutheria</taxon>
        <taxon>Euarchontoglires</taxon>
        <taxon>Glires</taxon>
        <taxon>Rodentia</taxon>
        <taxon>Myomorpha</taxon>
        <taxon>Muroidea</taxon>
        <taxon>Muridae</taxon>
        <taxon>Murinae</taxon>
        <taxon>Mus</taxon>
        <taxon>Mus</taxon>
    </lineage>
</organism>
<reference key="1">
    <citation type="journal article" date="2005" name="Science">
        <title>The transcriptional landscape of the mammalian genome.</title>
        <authorList>
            <person name="Carninci P."/>
            <person name="Kasukawa T."/>
            <person name="Katayama S."/>
            <person name="Gough J."/>
            <person name="Frith M.C."/>
            <person name="Maeda N."/>
            <person name="Oyama R."/>
            <person name="Ravasi T."/>
            <person name="Lenhard B."/>
            <person name="Wells C."/>
            <person name="Kodzius R."/>
            <person name="Shimokawa K."/>
            <person name="Bajic V.B."/>
            <person name="Brenner S.E."/>
            <person name="Batalov S."/>
            <person name="Forrest A.R."/>
            <person name="Zavolan M."/>
            <person name="Davis M.J."/>
            <person name="Wilming L.G."/>
            <person name="Aidinis V."/>
            <person name="Allen J.E."/>
            <person name="Ambesi-Impiombato A."/>
            <person name="Apweiler R."/>
            <person name="Aturaliya R.N."/>
            <person name="Bailey T.L."/>
            <person name="Bansal M."/>
            <person name="Baxter L."/>
            <person name="Beisel K.W."/>
            <person name="Bersano T."/>
            <person name="Bono H."/>
            <person name="Chalk A.M."/>
            <person name="Chiu K.P."/>
            <person name="Choudhary V."/>
            <person name="Christoffels A."/>
            <person name="Clutterbuck D.R."/>
            <person name="Crowe M.L."/>
            <person name="Dalla E."/>
            <person name="Dalrymple B.P."/>
            <person name="de Bono B."/>
            <person name="Della Gatta G."/>
            <person name="di Bernardo D."/>
            <person name="Down T."/>
            <person name="Engstrom P."/>
            <person name="Fagiolini M."/>
            <person name="Faulkner G."/>
            <person name="Fletcher C.F."/>
            <person name="Fukushima T."/>
            <person name="Furuno M."/>
            <person name="Futaki S."/>
            <person name="Gariboldi M."/>
            <person name="Georgii-Hemming P."/>
            <person name="Gingeras T.R."/>
            <person name="Gojobori T."/>
            <person name="Green R.E."/>
            <person name="Gustincich S."/>
            <person name="Harbers M."/>
            <person name="Hayashi Y."/>
            <person name="Hensch T.K."/>
            <person name="Hirokawa N."/>
            <person name="Hill D."/>
            <person name="Huminiecki L."/>
            <person name="Iacono M."/>
            <person name="Ikeo K."/>
            <person name="Iwama A."/>
            <person name="Ishikawa T."/>
            <person name="Jakt M."/>
            <person name="Kanapin A."/>
            <person name="Katoh M."/>
            <person name="Kawasawa Y."/>
            <person name="Kelso J."/>
            <person name="Kitamura H."/>
            <person name="Kitano H."/>
            <person name="Kollias G."/>
            <person name="Krishnan S.P."/>
            <person name="Kruger A."/>
            <person name="Kummerfeld S.K."/>
            <person name="Kurochkin I.V."/>
            <person name="Lareau L.F."/>
            <person name="Lazarevic D."/>
            <person name="Lipovich L."/>
            <person name="Liu J."/>
            <person name="Liuni S."/>
            <person name="McWilliam S."/>
            <person name="Madan Babu M."/>
            <person name="Madera M."/>
            <person name="Marchionni L."/>
            <person name="Matsuda H."/>
            <person name="Matsuzawa S."/>
            <person name="Miki H."/>
            <person name="Mignone F."/>
            <person name="Miyake S."/>
            <person name="Morris K."/>
            <person name="Mottagui-Tabar S."/>
            <person name="Mulder N."/>
            <person name="Nakano N."/>
            <person name="Nakauchi H."/>
            <person name="Ng P."/>
            <person name="Nilsson R."/>
            <person name="Nishiguchi S."/>
            <person name="Nishikawa S."/>
            <person name="Nori F."/>
            <person name="Ohara O."/>
            <person name="Okazaki Y."/>
            <person name="Orlando V."/>
            <person name="Pang K.C."/>
            <person name="Pavan W.J."/>
            <person name="Pavesi G."/>
            <person name="Pesole G."/>
            <person name="Petrovsky N."/>
            <person name="Piazza S."/>
            <person name="Reed J."/>
            <person name="Reid J.F."/>
            <person name="Ring B.Z."/>
            <person name="Ringwald M."/>
            <person name="Rost B."/>
            <person name="Ruan Y."/>
            <person name="Salzberg S.L."/>
            <person name="Sandelin A."/>
            <person name="Schneider C."/>
            <person name="Schoenbach C."/>
            <person name="Sekiguchi K."/>
            <person name="Semple C.A."/>
            <person name="Seno S."/>
            <person name="Sessa L."/>
            <person name="Sheng Y."/>
            <person name="Shibata Y."/>
            <person name="Shimada H."/>
            <person name="Shimada K."/>
            <person name="Silva D."/>
            <person name="Sinclair B."/>
            <person name="Sperling S."/>
            <person name="Stupka E."/>
            <person name="Sugiura K."/>
            <person name="Sultana R."/>
            <person name="Takenaka Y."/>
            <person name="Taki K."/>
            <person name="Tammoja K."/>
            <person name="Tan S.L."/>
            <person name="Tang S."/>
            <person name="Taylor M.S."/>
            <person name="Tegner J."/>
            <person name="Teichmann S.A."/>
            <person name="Ueda H.R."/>
            <person name="van Nimwegen E."/>
            <person name="Verardo R."/>
            <person name="Wei C.L."/>
            <person name="Yagi K."/>
            <person name="Yamanishi H."/>
            <person name="Zabarovsky E."/>
            <person name="Zhu S."/>
            <person name="Zimmer A."/>
            <person name="Hide W."/>
            <person name="Bult C."/>
            <person name="Grimmond S.M."/>
            <person name="Teasdale R.D."/>
            <person name="Liu E.T."/>
            <person name="Brusic V."/>
            <person name="Quackenbush J."/>
            <person name="Wahlestedt C."/>
            <person name="Mattick J.S."/>
            <person name="Hume D.A."/>
            <person name="Kai C."/>
            <person name="Sasaki D."/>
            <person name="Tomaru Y."/>
            <person name="Fukuda S."/>
            <person name="Kanamori-Katayama M."/>
            <person name="Suzuki M."/>
            <person name="Aoki J."/>
            <person name="Arakawa T."/>
            <person name="Iida J."/>
            <person name="Imamura K."/>
            <person name="Itoh M."/>
            <person name="Kato T."/>
            <person name="Kawaji H."/>
            <person name="Kawagashira N."/>
            <person name="Kawashima T."/>
            <person name="Kojima M."/>
            <person name="Kondo S."/>
            <person name="Konno H."/>
            <person name="Nakano K."/>
            <person name="Ninomiya N."/>
            <person name="Nishio T."/>
            <person name="Okada M."/>
            <person name="Plessy C."/>
            <person name="Shibata K."/>
            <person name="Shiraki T."/>
            <person name="Suzuki S."/>
            <person name="Tagami M."/>
            <person name="Waki K."/>
            <person name="Watahiki A."/>
            <person name="Okamura-Oho Y."/>
            <person name="Suzuki H."/>
            <person name="Kawai J."/>
            <person name="Hayashizaki Y."/>
        </authorList>
    </citation>
    <scope>NUCLEOTIDE SEQUENCE [LARGE SCALE MRNA]</scope>
    <source>
        <strain>C57BL/6J</strain>
        <tissue>Embryo</tissue>
        <tissue>Head</tissue>
    </source>
</reference>
<reference key="2">
    <citation type="journal article" date="2004" name="Genome Res.">
        <title>The status, quality, and expansion of the NIH full-length cDNA project: the Mammalian Gene Collection (MGC).</title>
        <authorList>
            <consortium name="The MGC Project Team"/>
        </authorList>
    </citation>
    <scope>NUCLEOTIDE SEQUENCE [LARGE SCALE MRNA]</scope>
    <source>
        <strain>FVB/N-3</strain>
        <tissue>Mammary tumor</tissue>
    </source>
</reference>
<proteinExistence type="evidence at transcript level"/>
<feature type="signal peptide" evidence="2">
    <location>
        <begin position="1"/>
        <end position="21"/>
    </location>
</feature>
<feature type="chain" id="PRO_0000233092" description="Platelet-derived growth factor receptor-like protein">
    <location>
        <begin position="22"/>
        <end position="375"/>
    </location>
</feature>
<feature type="domain" description="Ig-like C2-type 1">
    <location>
        <begin position="47"/>
        <end position="159"/>
    </location>
</feature>
<feature type="domain" description="Ig-like C2-type 2">
    <location>
        <begin position="272"/>
        <end position="375"/>
    </location>
</feature>
<feature type="region of interest" description="Disordered" evidence="4">
    <location>
        <begin position="20"/>
        <end position="63"/>
    </location>
</feature>
<feature type="compositionally biased region" description="Basic residues" evidence="4">
    <location>
        <begin position="40"/>
        <end position="50"/>
    </location>
</feature>
<feature type="glycosylation site" description="N-linked (GlcNAc...) asparagine" evidence="2">
    <location>
        <position position="219"/>
    </location>
</feature>
<feature type="disulfide bond" evidence="3">
    <location>
        <begin position="96"/>
        <end position="143"/>
    </location>
</feature>
<feature type="disulfide bond" evidence="3">
    <location>
        <begin position="293"/>
        <end position="357"/>
    </location>
</feature>
<feature type="sequence conflict" description="In Ref. 1; BAB23210/BAE21269." evidence="5" ref="1">
    <original>A</original>
    <variation>G</variation>
    <location>
        <position position="20"/>
    </location>
</feature>
<feature type="sequence conflict" description="In Ref. 1; BAB23210." evidence="5" ref="1">
    <original>I</original>
    <variation>V</variation>
    <location>
        <position position="327"/>
    </location>
</feature>
<name>PGFRL_MOUSE</name>
<gene>
    <name type="primary">Pdgfrl</name>
</gene>
<evidence type="ECO:0000250" key="1"/>
<evidence type="ECO:0000255" key="2"/>
<evidence type="ECO:0000255" key="3">
    <source>
        <dbReference type="PROSITE-ProRule" id="PRU00114"/>
    </source>
</evidence>
<evidence type="ECO:0000256" key="4">
    <source>
        <dbReference type="SAM" id="MobiDB-lite"/>
    </source>
</evidence>
<evidence type="ECO:0000305" key="5"/>
<accession>Q6PE55</accession>
<accession>Q3V182</accession>
<accession>Q9D0Z1</accession>
<keyword id="KW-1015">Disulfide bond</keyword>
<keyword id="KW-0325">Glycoprotein</keyword>
<keyword id="KW-0393">Immunoglobulin domain</keyword>
<keyword id="KW-1185">Reference proteome</keyword>
<keyword id="KW-0677">Repeat</keyword>
<keyword id="KW-0964">Secreted</keyword>
<keyword id="KW-0732">Signal</keyword>